<accession>A6TZP7</accession>
<reference key="1">
    <citation type="submission" date="2007-06" db="EMBL/GenBank/DDBJ databases">
        <title>Complete sequence of chromosome of Staphylococcus aureus subsp. aureus JH1.</title>
        <authorList>
            <consortium name="US DOE Joint Genome Institute"/>
            <person name="Copeland A."/>
            <person name="Lucas S."/>
            <person name="Lapidus A."/>
            <person name="Barry K."/>
            <person name="Detter J.C."/>
            <person name="Glavina del Rio T."/>
            <person name="Hammon N."/>
            <person name="Israni S."/>
            <person name="Dalin E."/>
            <person name="Tice H."/>
            <person name="Pitluck S."/>
            <person name="Chain P."/>
            <person name="Malfatti S."/>
            <person name="Shin M."/>
            <person name="Vergez L."/>
            <person name="Schmutz J."/>
            <person name="Larimer F."/>
            <person name="Land M."/>
            <person name="Hauser L."/>
            <person name="Kyrpides N."/>
            <person name="Ivanova N."/>
            <person name="Tomasz A."/>
            <person name="Richardson P."/>
        </authorList>
    </citation>
    <scope>NUCLEOTIDE SEQUENCE [LARGE SCALE GENOMIC DNA]</scope>
    <source>
        <strain>JH1</strain>
    </source>
</reference>
<proteinExistence type="inferred from homology"/>
<feature type="chain" id="PRO_1000080902" description="ATP-dependent Clp protease proteolytic subunit">
    <location>
        <begin position="1"/>
        <end position="195"/>
    </location>
</feature>
<feature type="active site" description="Nucleophile" evidence="1">
    <location>
        <position position="98"/>
    </location>
</feature>
<feature type="active site" evidence="1">
    <location>
        <position position="123"/>
    </location>
</feature>
<organism>
    <name type="scientific">Staphylococcus aureus (strain JH1)</name>
    <dbReference type="NCBI Taxonomy" id="359787"/>
    <lineage>
        <taxon>Bacteria</taxon>
        <taxon>Bacillati</taxon>
        <taxon>Bacillota</taxon>
        <taxon>Bacilli</taxon>
        <taxon>Bacillales</taxon>
        <taxon>Staphylococcaceae</taxon>
        <taxon>Staphylococcus</taxon>
    </lineage>
</organism>
<dbReference type="EC" id="3.4.21.92" evidence="1"/>
<dbReference type="EMBL" id="CP000736">
    <property type="protein sequence ID" value="ABR51665.1"/>
    <property type="molecule type" value="Genomic_DNA"/>
</dbReference>
<dbReference type="SMR" id="A6TZP7"/>
<dbReference type="MEROPS" id="S14.001"/>
<dbReference type="KEGG" id="sah:SaurJH1_0809"/>
<dbReference type="HOGENOM" id="CLU_058707_3_2_9"/>
<dbReference type="GO" id="GO:0005737">
    <property type="term" value="C:cytoplasm"/>
    <property type="evidence" value="ECO:0007669"/>
    <property type="project" value="UniProtKB-SubCell"/>
</dbReference>
<dbReference type="GO" id="GO:0009368">
    <property type="term" value="C:endopeptidase Clp complex"/>
    <property type="evidence" value="ECO:0007669"/>
    <property type="project" value="TreeGrafter"/>
</dbReference>
<dbReference type="GO" id="GO:0004176">
    <property type="term" value="F:ATP-dependent peptidase activity"/>
    <property type="evidence" value="ECO:0007669"/>
    <property type="project" value="InterPro"/>
</dbReference>
<dbReference type="GO" id="GO:0051117">
    <property type="term" value="F:ATPase binding"/>
    <property type="evidence" value="ECO:0007669"/>
    <property type="project" value="TreeGrafter"/>
</dbReference>
<dbReference type="GO" id="GO:0004252">
    <property type="term" value="F:serine-type endopeptidase activity"/>
    <property type="evidence" value="ECO:0007669"/>
    <property type="project" value="UniProtKB-UniRule"/>
</dbReference>
<dbReference type="GO" id="GO:0006515">
    <property type="term" value="P:protein quality control for misfolded or incompletely synthesized proteins"/>
    <property type="evidence" value="ECO:0007669"/>
    <property type="project" value="TreeGrafter"/>
</dbReference>
<dbReference type="CDD" id="cd07017">
    <property type="entry name" value="S14_ClpP_2"/>
    <property type="match status" value="1"/>
</dbReference>
<dbReference type="FunFam" id="3.90.226.10:FF:000001">
    <property type="entry name" value="ATP-dependent Clp protease proteolytic subunit"/>
    <property type="match status" value="1"/>
</dbReference>
<dbReference type="Gene3D" id="3.90.226.10">
    <property type="entry name" value="2-enoyl-CoA Hydratase, Chain A, domain 1"/>
    <property type="match status" value="1"/>
</dbReference>
<dbReference type="HAMAP" id="MF_00444">
    <property type="entry name" value="ClpP"/>
    <property type="match status" value="1"/>
</dbReference>
<dbReference type="InterPro" id="IPR001907">
    <property type="entry name" value="ClpP"/>
</dbReference>
<dbReference type="InterPro" id="IPR029045">
    <property type="entry name" value="ClpP/crotonase-like_dom_sf"/>
</dbReference>
<dbReference type="InterPro" id="IPR023562">
    <property type="entry name" value="ClpP/TepA"/>
</dbReference>
<dbReference type="InterPro" id="IPR033135">
    <property type="entry name" value="ClpP_His_AS"/>
</dbReference>
<dbReference type="InterPro" id="IPR018215">
    <property type="entry name" value="ClpP_Ser_AS"/>
</dbReference>
<dbReference type="NCBIfam" id="TIGR00493">
    <property type="entry name" value="clpP"/>
    <property type="match status" value="1"/>
</dbReference>
<dbReference type="NCBIfam" id="NF001368">
    <property type="entry name" value="PRK00277.1"/>
    <property type="match status" value="1"/>
</dbReference>
<dbReference type="NCBIfam" id="NF009205">
    <property type="entry name" value="PRK12553.1"/>
    <property type="match status" value="1"/>
</dbReference>
<dbReference type="PANTHER" id="PTHR10381">
    <property type="entry name" value="ATP-DEPENDENT CLP PROTEASE PROTEOLYTIC SUBUNIT"/>
    <property type="match status" value="1"/>
</dbReference>
<dbReference type="PANTHER" id="PTHR10381:SF70">
    <property type="entry name" value="ATP-DEPENDENT CLP PROTEASE PROTEOLYTIC SUBUNIT"/>
    <property type="match status" value="1"/>
</dbReference>
<dbReference type="Pfam" id="PF00574">
    <property type="entry name" value="CLP_protease"/>
    <property type="match status" value="1"/>
</dbReference>
<dbReference type="PRINTS" id="PR00127">
    <property type="entry name" value="CLPPROTEASEP"/>
</dbReference>
<dbReference type="SUPFAM" id="SSF52096">
    <property type="entry name" value="ClpP/crotonase"/>
    <property type="match status" value="1"/>
</dbReference>
<dbReference type="PROSITE" id="PS00382">
    <property type="entry name" value="CLP_PROTEASE_HIS"/>
    <property type="match status" value="1"/>
</dbReference>
<dbReference type="PROSITE" id="PS00381">
    <property type="entry name" value="CLP_PROTEASE_SER"/>
    <property type="match status" value="1"/>
</dbReference>
<protein>
    <recommendedName>
        <fullName evidence="1">ATP-dependent Clp protease proteolytic subunit</fullName>
        <ecNumber evidence="1">3.4.21.92</ecNumber>
    </recommendedName>
    <alternativeName>
        <fullName evidence="1">Endopeptidase Clp</fullName>
    </alternativeName>
</protein>
<keyword id="KW-0963">Cytoplasm</keyword>
<keyword id="KW-0378">Hydrolase</keyword>
<keyword id="KW-0645">Protease</keyword>
<keyword id="KW-0720">Serine protease</keyword>
<name>CLPP_STAA2</name>
<comment type="function">
    <text evidence="1">Cleaves peptides in various proteins in a process that requires ATP hydrolysis. Has a chymotrypsin-like activity. Plays a major role in the degradation of misfolded proteins.</text>
</comment>
<comment type="catalytic activity">
    <reaction evidence="1">
        <text>Hydrolysis of proteins to small peptides in the presence of ATP and magnesium. alpha-casein is the usual test substrate. In the absence of ATP, only oligopeptides shorter than five residues are hydrolyzed (such as succinyl-Leu-Tyr-|-NHMec, and Leu-Tyr-Leu-|-Tyr-Trp, in which cleavage of the -Tyr-|-Leu- and -Tyr-|-Trp bonds also occurs).</text>
        <dbReference type="EC" id="3.4.21.92"/>
    </reaction>
</comment>
<comment type="subunit">
    <text evidence="1">Fourteen ClpP subunits assemble into 2 heptameric rings which stack back to back to give a disk-like structure with a central cavity, resembling the structure of eukaryotic proteasomes.</text>
</comment>
<comment type="subcellular location">
    <subcellularLocation>
        <location evidence="1">Cytoplasm</location>
    </subcellularLocation>
</comment>
<comment type="similarity">
    <text evidence="1">Belongs to the peptidase S14 family.</text>
</comment>
<gene>
    <name evidence="1" type="primary">clpP</name>
    <name type="ordered locus">SaurJH1_0809</name>
</gene>
<sequence length="195" mass="21514">MNLIPTVIETTNRGERAYDIYSRLLKDRIIMLGSQIDDNVANSIVSQLLFLQAQDSEKDIYLYINSPGGSVTAGFAIYDTIQHIKPDVQTICIGMAASMGSFLLAAGAKGKRFALPNAEVMIHQPLGGAQGQATEIEIAANHILKTREKLNRILSERTGQSIEKIQKDTDRDNFLTAEEAKEYGLIDEVMVPETK</sequence>
<evidence type="ECO:0000255" key="1">
    <source>
        <dbReference type="HAMAP-Rule" id="MF_00444"/>
    </source>
</evidence>